<feature type="chain" id="PRO_0000201634" description="Putative uncharacterized transporter HI_0586">
    <location>
        <begin position="1"/>
        <end position="145"/>
    </location>
</feature>
<feature type="transmembrane region" description="Helical" evidence="1">
    <location>
        <begin position="1"/>
        <end position="21"/>
    </location>
</feature>
<feature type="transmembrane region" description="Helical" evidence="1">
    <location>
        <begin position="28"/>
        <end position="48"/>
    </location>
</feature>
<feature type="transmembrane region" description="Helical" evidence="1">
    <location>
        <begin position="54"/>
        <end position="74"/>
    </location>
</feature>
<feature type="transmembrane region" description="Helical" evidence="1">
    <location>
        <begin position="96"/>
        <end position="116"/>
    </location>
</feature>
<sequence length="145" mass="15226">MELFKSIVAVIGIIATIYFLIKKAETRTVLIGVGLIMSILTLNPMGALDAFAKSMTSGGLIMAICSSMGFAYVMKYTQCDTHLVHLLTKPLSGLKFFLIPIATIITFFINIAIPSAAGCAAAVGATLIPVLKSAGVRPATAGQLF</sequence>
<reference key="1">
    <citation type="journal article" date="1995" name="Science">
        <title>Whole-genome random sequencing and assembly of Haemophilus influenzae Rd.</title>
        <authorList>
            <person name="Fleischmann R.D."/>
            <person name="Adams M.D."/>
            <person name="White O."/>
            <person name="Clayton R.A."/>
            <person name="Kirkness E.F."/>
            <person name="Kerlavage A.R."/>
            <person name="Bult C.J."/>
            <person name="Tomb J.-F."/>
            <person name="Dougherty B.A."/>
            <person name="Merrick J.M."/>
            <person name="McKenney K."/>
            <person name="Sutton G.G."/>
            <person name="FitzHugh W."/>
            <person name="Fields C.A."/>
            <person name="Gocayne J.D."/>
            <person name="Scott J.D."/>
            <person name="Shirley R."/>
            <person name="Liu L.-I."/>
            <person name="Glodek A."/>
            <person name="Kelley J.M."/>
            <person name="Weidman J.F."/>
            <person name="Phillips C.A."/>
            <person name="Spriggs T."/>
            <person name="Hedblom E."/>
            <person name="Cotton M.D."/>
            <person name="Utterback T.R."/>
            <person name="Hanna M.C."/>
            <person name="Nguyen D.T."/>
            <person name="Saudek D.M."/>
            <person name="Brandon R.C."/>
            <person name="Fine L.D."/>
            <person name="Fritchman J.L."/>
            <person name="Fuhrmann J.L."/>
            <person name="Geoghagen N.S.M."/>
            <person name="Gnehm C.L."/>
            <person name="McDonald L.A."/>
            <person name="Small K.V."/>
            <person name="Fraser C.M."/>
            <person name="Smith H.O."/>
            <person name="Venter J.C."/>
        </authorList>
    </citation>
    <scope>NUCLEOTIDE SEQUENCE [LARGE SCALE GENOMIC DNA]</scope>
    <source>
        <strain>ATCC 51907 / DSM 11121 / KW20 / Rd</strain>
    </source>
</reference>
<organism>
    <name type="scientific">Haemophilus influenzae (strain ATCC 51907 / DSM 11121 / KW20 / Rd)</name>
    <dbReference type="NCBI Taxonomy" id="71421"/>
    <lineage>
        <taxon>Bacteria</taxon>
        <taxon>Pseudomonadati</taxon>
        <taxon>Pseudomonadota</taxon>
        <taxon>Gammaproteobacteria</taxon>
        <taxon>Pasteurellales</taxon>
        <taxon>Pasteurellaceae</taxon>
        <taxon>Haemophilus</taxon>
    </lineage>
</organism>
<comment type="subcellular location">
    <subcellularLocation>
        <location evidence="2">Cell membrane</location>
        <topology evidence="2">Multi-pass membrane protein</topology>
    </subcellularLocation>
</comment>
<comment type="similarity">
    <text evidence="2">Belongs to the DcuC/DcuD transporter (TC 2.A.61) family.</text>
</comment>
<comment type="caution">
    <text evidence="2">Could be the product of a pseudogene.</text>
</comment>
<protein>
    <recommendedName>
        <fullName>Putative uncharacterized transporter HI_0586</fullName>
    </recommendedName>
</protein>
<evidence type="ECO:0000255" key="1"/>
<evidence type="ECO:0000305" key="2"/>
<name>Y586_HAEIN</name>
<dbReference type="EMBL" id="L42023">
    <property type="protein sequence ID" value="AAC22250.1"/>
    <property type="molecule type" value="Genomic_DNA"/>
</dbReference>
<dbReference type="PIR" id="A64010">
    <property type="entry name" value="A64010"/>
</dbReference>
<dbReference type="SMR" id="P44019"/>
<dbReference type="STRING" id="71421.HI_0586"/>
<dbReference type="EnsemblBacteria" id="AAC22250">
    <property type="protein sequence ID" value="AAC22250"/>
    <property type="gene ID" value="HI_0586"/>
</dbReference>
<dbReference type="KEGG" id="hin:HI_0586"/>
<dbReference type="eggNOG" id="COG3069">
    <property type="taxonomic scope" value="Bacteria"/>
</dbReference>
<dbReference type="HOGENOM" id="CLU_1784149_0_0_6"/>
<dbReference type="Proteomes" id="UP000000579">
    <property type="component" value="Chromosome"/>
</dbReference>
<dbReference type="GO" id="GO:0005886">
    <property type="term" value="C:plasma membrane"/>
    <property type="evidence" value="ECO:0007669"/>
    <property type="project" value="UniProtKB-SubCell"/>
</dbReference>
<dbReference type="GO" id="GO:0015556">
    <property type="term" value="F:C4-dicarboxylate transmembrane transporter activity"/>
    <property type="evidence" value="ECO:0007669"/>
    <property type="project" value="InterPro"/>
</dbReference>
<dbReference type="InterPro" id="IPR004669">
    <property type="entry name" value="C4_dicarb_anaerob_car"/>
</dbReference>
<dbReference type="NCBIfam" id="NF037994">
    <property type="entry name" value="DcuC_1"/>
    <property type="match status" value="1"/>
</dbReference>
<keyword id="KW-1003">Cell membrane</keyword>
<keyword id="KW-0472">Membrane</keyword>
<keyword id="KW-1185">Reference proteome</keyword>
<keyword id="KW-0812">Transmembrane</keyword>
<keyword id="KW-1133">Transmembrane helix</keyword>
<proteinExistence type="uncertain"/>
<gene>
    <name type="ordered locus">HI_0586</name>
</gene>
<accession>P44019</accession>